<dbReference type="EMBL" id="FM992695">
    <property type="protein sequence ID" value="CAX39776.1"/>
    <property type="molecule type" value="Genomic_DNA"/>
</dbReference>
<dbReference type="RefSeq" id="XP_002421832.1">
    <property type="nucleotide sequence ID" value="XM_002421787.1"/>
</dbReference>
<dbReference type="SMR" id="B9WL71"/>
<dbReference type="GeneID" id="8049584"/>
<dbReference type="KEGG" id="cdu:CD36_27670"/>
<dbReference type="CGD" id="CAL0000168221">
    <property type="gene designation" value="Cd36_27670"/>
</dbReference>
<dbReference type="eggNOG" id="KOG4020">
    <property type="taxonomic scope" value="Eukaryota"/>
</dbReference>
<dbReference type="HOGENOM" id="CLU_067152_0_0_1"/>
<dbReference type="OrthoDB" id="311633at2759"/>
<dbReference type="Proteomes" id="UP000002605">
    <property type="component" value="Chromosome R"/>
</dbReference>
<dbReference type="GO" id="GO:0005758">
    <property type="term" value="C:mitochondrial intermembrane space"/>
    <property type="evidence" value="ECO:0007669"/>
    <property type="project" value="UniProtKB-SubCell"/>
</dbReference>
<dbReference type="GO" id="GO:0051537">
    <property type="term" value="F:2 iron, 2 sulfur cluster binding"/>
    <property type="evidence" value="ECO:0007669"/>
    <property type="project" value="UniProtKB-UniRule"/>
</dbReference>
<dbReference type="GO" id="GO:0051539">
    <property type="term" value="F:4 iron, 4 sulfur cluster binding"/>
    <property type="evidence" value="ECO:0007669"/>
    <property type="project" value="UniProtKB-KW"/>
</dbReference>
<dbReference type="GO" id="GO:0009055">
    <property type="term" value="F:electron transfer activity"/>
    <property type="evidence" value="ECO:0007669"/>
    <property type="project" value="UniProtKB-UniRule"/>
</dbReference>
<dbReference type="GO" id="GO:0046872">
    <property type="term" value="F:metal ion binding"/>
    <property type="evidence" value="ECO:0007669"/>
    <property type="project" value="UniProtKB-KW"/>
</dbReference>
<dbReference type="GO" id="GO:0016226">
    <property type="term" value="P:iron-sulfur cluster assembly"/>
    <property type="evidence" value="ECO:0007669"/>
    <property type="project" value="UniProtKB-UniRule"/>
</dbReference>
<dbReference type="Gene3D" id="3.40.50.11000">
    <property type="entry name" value="Fe-S cluster assembly protein Dre2, N-terminal domain"/>
    <property type="match status" value="1"/>
</dbReference>
<dbReference type="HAMAP" id="MF_03115">
    <property type="entry name" value="Anamorsin"/>
    <property type="match status" value="1"/>
</dbReference>
<dbReference type="InterPro" id="IPR007785">
    <property type="entry name" value="Anamorsin"/>
</dbReference>
<dbReference type="InterPro" id="IPR046408">
    <property type="entry name" value="CIAPIN1"/>
</dbReference>
<dbReference type="InterPro" id="IPR031838">
    <property type="entry name" value="Dre2_N"/>
</dbReference>
<dbReference type="PANTHER" id="PTHR13273">
    <property type="entry name" value="ANAMORSIN"/>
    <property type="match status" value="1"/>
</dbReference>
<dbReference type="PANTHER" id="PTHR13273:SF14">
    <property type="entry name" value="ANAMORSIN"/>
    <property type="match status" value="1"/>
</dbReference>
<dbReference type="Pfam" id="PF05093">
    <property type="entry name" value="CIAPIN1"/>
    <property type="match status" value="1"/>
</dbReference>
<dbReference type="Pfam" id="PF16803">
    <property type="entry name" value="DRE2_N"/>
    <property type="match status" value="1"/>
</dbReference>
<accession>B9WL71</accession>
<feature type="chain" id="PRO_0000392382" description="Fe-S cluster assembly protein DRE2">
    <location>
        <begin position="1"/>
        <end position="385"/>
    </location>
</feature>
<feature type="region of interest" description="N-terminal SAM-like domain" evidence="1">
    <location>
        <begin position="1"/>
        <end position="177"/>
    </location>
</feature>
<feature type="region of interest" description="Linker" evidence="1">
    <location>
        <begin position="178"/>
        <end position="240"/>
    </location>
</feature>
<feature type="region of interest" description="Disordered" evidence="2">
    <location>
        <begin position="200"/>
        <end position="226"/>
    </location>
</feature>
<feature type="region of interest" description="Fe-S binding site A" evidence="1">
    <location>
        <begin position="261"/>
        <end position="280"/>
    </location>
</feature>
<feature type="region of interest" description="Fe-S binding site B" evidence="1">
    <location>
        <begin position="348"/>
        <end position="362"/>
    </location>
</feature>
<feature type="short sequence motif" description="Cx2C motif 1" evidence="1">
    <location>
        <begin position="348"/>
        <end position="351"/>
    </location>
</feature>
<feature type="short sequence motif" description="Cx2C motif 2" evidence="1">
    <location>
        <begin position="359"/>
        <end position="362"/>
    </location>
</feature>
<feature type="compositionally biased region" description="Acidic residues" evidence="2">
    <location>
        <begin position="217"/>
        <end position="226"/>
    </location>
</feature>
<feature type="binding site" evidence="1">
    <location>
        <position position="261"/>
    </location>
    <ligand>
        <name>[2Fe-2S] cluster</name>
        <dbReference type="ChEBI" id="CHEBI:190135"/>
    </ligand>
</feature>
<feature type="binding site" evidence="1">
    <location>
        <position position="275"/>
    </location>
    <ligand>
        <name>[2Fe-2S] cluster</name>
        <dbReference type="ChEBI" id="CHEBI:190135"/>
    </ligand>
</feature>
<feature type="binding site" evidence="1">
    <location>
        <position position="278"/>
    </location>
    <ligand>
        <name>[2Fe-2S] cluster</name>
        <dbReference type="ChEBI" id="CHEBI:190135"/>
    </ligand>
</feature>
<feature type="binding site" evidence="1">
    <location>
        <position position="280"/>
    </location>
    <ligand>
        <name>[2Fe-2S] cluster</name>
        <dbReference type="ChEBI" id="CHEBI:190135"/>
    </ligand>
</feature>
<feature type="binding site" evidence="1">
    <location>
        <position position="348"/>
    </location>
    <ligand>
        <name>[4Fe-4S] cluster</name>
        <dbReference type="ChEBI" id="CHEBI:49883"/>
    </ligand>
</feature>
<feature type="binding site" evidence="1">
    <location>
        <position position="351"/>
    </location>
    <ligand>
        <name>[4Fe-4S] cluster</name>
        <dbReference type="ChEBI" id="CHEBI:49883"/>
    </ligand>
</feature>
<feature type="binding site" evidence="1">
    <location>
        <position position="359"/>
    </location>
    <ligand>
        <name>[4Fe-4S] cluster</name>
        <dbReference type="ChEBI" id="CHEBI:49883"/>
    </ligand>
</feature>
<feature type="binding site" evidence="1">
    <location>
        <position position="362"/>
    </location>
    <ligand>
        <name>[4Fe-4S] cluster</name>
        <dbReference type="ChEBI" id="CHEBI:49883"/>
    </ligand>
</feature>
<organism>
    <name type="scientific">Candida dubliniensis (strain CD36 / ATCC MYA-646 / CBS 7987 / NCPF 3949 / NRRL Y-17841)</name>
    <name type="common">Yeast</name>
    <dbReference type="NCBI Taxonomy" id="573826"/>
    <lineage>
        <taxon>Eukaryota</taxon>
        <taxon>Fungi</taxon>
        <taxon>Dikarya</taxon>
        <taxon>Ascomycota</taxon>
        <taxon>Saccharomycotina</taxon>
        <taxon>Pichiomycetes</taxon>
        <taxon>Debaryomycetaceae</taxon>
        <taxon>Candida/Lodderomyces clade</taxon>
        <taxon>Candida</taxon>
    </lineage>
</organism>
<name>DRE2_CANDC</name>
<proteinExistence type="inferred from homology"/>
<evidence type="ECO:0000255" key="1">
    <source>
        <dbReference type="HAMAP-Rule" id="MF_03115"/>
    </source>
</evidence>
<evidence type="ECO:0000256" key="2">
    <source>
        <dbReference type="SAM" id="MobiDB-lite"/>
    </source>
</evidence>
<sequence>MTSSINILLLLHPTVVTDAHSVEQIKSKIYQSHNNDINSININQQIIDRITKGVIELPNDYYDEIIYINPNDEPQYREIPISLMQLIYKLLKSNGKFKGDLPLDQNLDVLMTGFIIEEEEQEQQEQQSGLNEGTVYVWVKPIPVDEPVVTLLKKKTTNNTKKSLPLFKKLNKNDMTINVPQEIDNITNNKRKLVETKLTYFSSDDENSSDGSLSDNANEEEEDDDELIDENDLLKYNNHNNNNNNNGEQSFSDKLITPRKCELSLNGGKKRKKACKDCTCGLKELEELEVSNQQNLQDQILGKLAQSATLEAIKIEERLKQQSQKKIKFTEEDLSEIDFTVQGKTGGCGSCALGDAFRCDGCPYLGLPPFKPGEVVKLDGFGEDI</sequence>
<keyword id="KW-0001">2Fe-2S</keyword>
<keyword id="KW-0004">4Fe-4S</keyword>
<keyword id="KW-0963">Cytoplasm</keyword>
<keyword id="KW-0408">Iron</keyword>
<keyword id="KW-0411">Iron-sulfur</keyword>
<keyword id="KW-0479">Metal-binding</keyword>
<keyword id="KW-0496">Mitochondrion</keyword>
<protein>
    <recommendedName>
        <fullName evidence="1">Fe-S cluster assembly protein DRE2</fullName>
    </recommendedName>
    <alternativeName>
        <fullName evidence="1">Anamorsin homolog</fullName>
    </alternativeName>
</protein>
<gene>
    <name evidence="1" type="primary">DRE2</name>
    <name type="ORF">CD36_27670</name>
</gene>
<reference key="1">
    <citation type="journal article" date="2009" name="Genome Res.">
        <title>Comparative genomics of the fungal pathogens Candida dubliniensis and Candida albicans.</title>
        <authorList>
            <person name="Jackson A.P."/>
            <person name="Gamble J.A."/>
            <person name="Yeomans T."/>
            <person name="Moran G.P."/>
            <person name="Saunders D."/>
            <person name="Harris D."/>
            <person name="Aslett M."/>
            <person name="Barrell J.F."/>
            <person name="Butler G."/>
            <person name="Citiulo F."/>
            <person name="Coleman D.C."/>
            <person name="de Groot P.W.J."/>
            <person name="Goodwin T.J."/>
            <person name="Quail M.A."/>
            <person name="McQuillan J."/>
            <person name="Munro C.A."/>
            <person name="Pain A."/>
            <person name="Poulter R.T."/>
            <person name="Rajandream M.A."/>
            <person name="Renauld H."/>
            <person name="Spiering M.J."/>
            <person name="Tivey A."/>
            <person name="Gow N.A.R."/>
            <person name="Barrell B."/>
            <person name="Sullivan D.J."/>
            <person name="Berriman M."/>
        </authorList>
    </citation>
    <scope>NUCLEOTIDE SEQUENCE [LARGE SCALE GENOMIC DNA]</scope>
    <source>
        <strain>CD36 / ATCC MYA-646 / CBS 7987 / NCPF 3949 / NRRL Y-17841</strain>
    </source>
</reference>
<comment type="function">
    <text evidence="1">Component of the cytosolic iron-sulfur (Fe-S) protein assembly (CIA) machinery required for the maturation of extramitochondrial Fe-S proteins. Part of an electron transfer chain functioning in an early step of cytosolic Fe-S biogenesis, facilitating the de novo assembly of a [4Fe-4S] cluster on the scaffold complex CFD1-NBP35. Electrons are transferred to DRE2 from NADPH via the FAD- and FMN-containing protein TAH18. TAH18-DRE2 are also required for the assembly of the diferric tyrosyl radical cofactor of ribonucleotide reductase (RNR), probably by providing electrons for reduction during radical cofactor maturation in the catalytic small subunit RNR2.</text>
</comment>
<comment type="cofactor">
    <cofactor evidence="1">
        <name>[2Fe-2S] cluster</name>
        <dbReference type="ChEBI" id="CHEBI:190135"/>
    </cofactor>
</comment>
<comment type="cofactor">
    <cofactor evidence="1">
        <name>[4Fe-4S] cluster</name>
        <dbReference type="ChEBI" id="CHEBI:49883"/>
    </cofactor>
</comment>
<comment type="subunit">
    <text evidence="1">Monomer. Interacts with TAH18. Interacts with MIA40.</text>
</comment>
<comment type="subcellular location">
    <subcellularLocation>
        <location evidence="1">Cytoplasm</location>
    </subcellularLocation>
    <subcellularLocation>
        <location evidence="1">Mitochondrion intermembrane space</location>
    </subcellularLocation>
</comment>
<comment type="domain">
    <text evidence="1">The C-terminal domain binds 2 Fe-S clusters but is otherwise mostly in an intrinsically disordered conformation.</text>
</comment>
<comment type="domain">
    <text evidence="1">The N-terminal domain has structural similarity with S-adenosyl-L-methionine-dependent methyltransferases, but does not bind S-adenosyl-L-methionine. It is required for correct assembly of the 2 Fe-S clusters.</text>
</comment>
<comment type="domain">
    <text evidence="1">The twin Cx2C motifs are involved in the recognition by the mitochondrial MIA40-ERV1 disulfide relay system. The formation of 2 disulfide bonds in the Cx2C motifs through dithiol/disulfide exchange reactions effectively traps the protein in the mitochondrial intermembrane space.</text>
</comment>
<comment type="similarity">
    <text evidence="1">Belongs to the anamorsin family.</text>
</comment>